<protein>
    <recommendedName>
        <fullName evidence="1">Anthranilate phosphoribosyltransferase</fullName>
        <ecNumber evidence="1">2.4.2.18</ecNumber>
    </recommendedName>
</protein>
<gene>
    <name evidence="1" type="primary">trpD</name>
    <name type="ordered locus">NMCC_0910</name>
</gene>
<keyword id="KW-0028">Amino-acid biosynthesis</keyword>
<keyword id="KW-0057">Aromatic amino acid biosynthesis</keyword>
<keyword id="KW-0328">Glycosyltransferase</keyword>
<keyword id="KW-0460">Magnesium</keyword>
<keyword id="KW-0479">Metal-binding</keyword>
<keyword id="KW-0808">Transferase</keyword>
<keyword id="KW-0822">Tryptophan biosynthesis</keyword>
<sequence>MITPQQAIERLISNNELFYDEMTDLMRQMMSGKVPPEQIAAILTGLRIKVETVSEITAAAAVMREFATKVPLENAEGLVDIVGTGGDGAKTFNISTTSMFVAAAAGAKVAKHGGRSVSSSSGAADVVEQMGANLNLTPEQVAQSIRQTGIGFMFAPNHHSAMRHVAPVRRSLGFRSIFNILGPLTNPAGAPNQLLGVFHTDLCGILSRVLQQLGSKHVLVVCGEGGLDEITLTGKTRVAELKDGKISEYDIRPEDFGIETRRNLDEIKVANTQESLLKMNEVLEGREGAARDIVLLNTAAALYAGNVAASLSDGISAAREAIDSGRAKSKKEEFVGFQPQQRCHFLGKMELG</sequence>
<organism>
    <name type="scientific">Neisseria meningitidis serogroup C (strain 053442)</name>
    <dbReference type="NCBI Taxonomy" id="374833"/>
    <lineage>
        <taxon>Bacteria</taxon>
        <taxon>Pseudomonadati</taxon>
        <taxon>Pseudomonadota</taxon>
        <taxon>Betaproteobacteria</taxon>
        <taxon>Neisseriales</taxon>
        <taxon>Neisseriaceae</taxon>
        <taxon>Neisseria</taxon>
    </lineage>
</organism>
<comment type="function">
    <text evidence="1">Catalyzes the transfer of the phosphoribosyl group of 5-phosphorylribose-1-pyrophosphate (PRPP) to anthranilate to yield N-(5'-phosphoribosyl)-anthranilate (PRA).</text>
</comment>
<comment type="catalytic activity">
    <reaction evidence="1">
        <text>N-(5-phospho-beta-D-ribosyl)anthranilate + diphosphate = 5-phospho-alpha-D-ribose 1-diphosphate + anthranilate</text>
        <dbReference type="Rhea" id="RHEA:11768"/>
        <dbReference type="ChEBI" id="CHEBI:16567"/>
        <dbReference type="ChEBI" id="CHEBI:18277"/>
        <dbReference type="ChEBI" id="CHEBI:33019"/>
        <dbReference type="ChEBI" id="CHEBI:58017"/>
        <dbReference type="EC" id="2.4.2.18"/>
    </reaction>
</comment>
<comment type="cofactor">
    <cofactor evidence="1">
        <name>Mg(2+)</name>
        <dbReference type="ChEBI" id="CHEBI:18420"/>
    </cofactor>
    <text evidence="1">Binds 2 magnesium ions per monomer.</text>
</comment>
<comment type="pathway">
    <text evidence="1">Amino-acid biosynthesis; L-tryptophan biosynthesis; L-tryptophan from chorismate: step 2/5.</text>
</comment>
<comment type="subunit">
    <text evidence="1">Homodimer.</text>
</comment>
<comment type="similarity">
    <text evidence="1">Belongs to the anthranilate phosphoribosyltransferase family.</text>
</comment>
<reference key="1">
    <citation type="journal article" date="2008" name="Genomics">
        <title>Characterization of ST-4821 complex, a unique Neisseria meningitidis clone.</title>
        <authorList>
            <person name="Peng J."/>
            <person name="Yang L."/>
            <person name="Yang F."/>
            <person name="Yang J."/>
            <person name="Yan Y."/>
            <person name="Nie H."/>
            <person name="Zhang X."/>
            <person name="Xiong Z."/>
            <person name="Jiang Y."/>
            <person name="Cheng F."/>
            <person name="Xu X."/>
            <person name="Chen S."/>
            <person name="Sun L."/>
            <person name="Li W."/>
            <person name="Shen Y."/>
            <person name="Shao Z."/>
            <person name="Liang X."/>
            <person name="Xu J."/>
            <person name="Jin Q."/>
        </authorList>
    </citation>
    <scope>NUCLEOTIDE SEQUENCE [LARGE SCALE GENOMIC DNA]</scope>
    <source>
        <strain>053442</strain>
    </source>
</reference>
<feature type="chain" id="PRO_1000078019" description="Anthranilate phosphoribosyltransferase">
    <location>
        <begin position="1"/>
        <end position="352"/>
    </location>
</feature>
<feature type="binding site" evidence="1">
    <location>
        <position position="83"/>
    </location>
    <ligand>
        <name>5-phospho-alpha-D-ribose 1-diphosphate</name>
        <dbReference type="ChEBI" id="CHEBI:58017"/>
    </ligand>
</feature>
<feature type="binding site" evidence="1">
    <location>
        <position position="83"/>
    </location>
    <ligand>
        <name>anthranilate</name>
        <dbReference type="ChEBI" id="CHEBI:16567"/>
        <label>1</label>
    </ligand>
</feature>
<feature type="binding site" evidence="1">
    <location>
        <begin position="86"/>
        <end position="87"/>
    </location>
    <ligand>
        <name>5-phospho-alpha-D-ribose 1-diphosphate</name>
        <dbReference type="ChEBI" id="CHEBI:58017"/>
    </ligand>
</feature>
<feature type="binding site" evidence="1">
    <location>
        <position position="91"/>
    </location>
    <ligand>
        <name>5-phospho-alpha-D-ribose 1-diphosphate</name>
        <dbReference type="ChEBI" id="CHEBI:58017"/>
    </ligand>
</feature>
<feature type="binding site" evidence="1">
    <location>
        <begin position="93"/>
        <end position="96"/>
    </location>
    <ligand>
        <name>5-phospho-alpha-D-ribose 1-diphosphate</name>
        <dbReference type="ChEBI" id="CHEBI:58017"/>
    </ligand>
</feature>
<feature type="binding site" evidence="1">
    <location>
        <position position="95"/>
    </location>
    <ligand>
        <name>Mg(2+)</name>
        <dbReference type="ChEBI" id="CHEBI:18420"/>
        <label>1</label>
    </ligand>
</feature>
<feature type="binding site" evidence="1">
    <location>
        <begin position="111"/>
        <end position="119"/>
    </location>
    <ligand>
        <name>5-phospho-alpha-D-ribose 1-diphosphate</name>
        <dbReference type="ChEBI" id="CHEBI:58017"/>
    </ligand>
</feature>
<feature type="binding site" evidence="1">
    <location>
        <position position="123"/>
    </location>
    <ligand>
        <name>5-phospho-alpha-D-ribose 1-diphosphate</name>
        <dbReference type="ChEBI" id="CHEBI:58017"/>
    </ligand>
</feature>
<feature type="binding site" evidence="1">
    <location>
        <position position="169"/>
    </location>
    <ligand>
        <name>anthranilate</name>
        <dbReference type="ChEBI" id="CHEBI:16567"/>
        <label>2</label>
    </ligand>
</feature>
<feature type="binding site" evidence="1">
    <location>
        <position position="228"/>
    </location>
    <ligand>
        <name>Mg(2+)</name>
        <dbReference type="ChEBI" id="CHEBI:18420"/>
        <label>2</label>
    </ligand>
</feature>
<feature type="binding site" evidence="1">
    <location>
        <position position="229"/>
    </location>
    <ligand>
        <name>Mg(2+)</name>
        <dbReference type="ChEBI" id="CHEBI:18420"/>
        <label>1</label>
    </ligand>
</feature>
<feature type="binding site" evidence="1">
    <location>
        <position position="229"/>
    </location>
    <ligand>
        <name>Mg(2+)</name>
        <dbReference type="ChEBI" id="CHEBI:18420"/>
        <label>2</label>
    </ligand>
</feature>
<evidence type="ECO:0000255" key="1">
    <source>
        <dbReference type="HAMAP-Rule" id="MF_00211"/>
    </source>
</evidence>
<dbReference type="EC" id="2.4.2.18" evidence="1"/>
<dbReference type="EMBL" id="CP000381">
    <property type="protein sequence ID" value="ABX73092.1"/>
    <property type="molecule type" value="Genomic_DNA"/>
</dbReference>
<dbReference type="RefSeq" id="WP_002221103.1">
    <property type="nucleotide sequence ID" value="NC_010120.1"/>
</dbReference>
<dbReference type="SMR" id="A9M4G6"/>
<dbReference type="KEGG" id="nmn:NMCC_0910"/>
<dbReference type="HOGENOM" id="CLU_034315_2_1_4"/>
<dbReference type="UniPathway" id="UPA00035">
    <property type="reaction ID" value="UER00041"/>
</dbReference>
<dbReference type="Proteomes" id="UP000001177">
    <property type="component" value="Chromosome"/>
</dbReference>
<dbReference type="GO" id="GO:0005829">
    <property type="term" value="C:cytosol"/>
    <property type="evidence" value="ECO:0007669"/>
    <property type="project" value="TreeGrafter"/>
</dbReference>
<dbReference type="GO" id="GO:0004048">
    <property type="term" value="F:anthranilate phosphoribosyltransferase activity"/>
    <property type="evidence" value="ECO:0007669"/>
    <property type="project" value="UniProtKB-UniRule"/>
</dbReference>
<dbReference type="GO" id="GO:0000287">
    <property type="term" value="F:magnesium ion binding"/>
    <property type="evidence" value="ECO:0007669"/>
    <property type="project" value="UniProtKB-UniRule"/>
</dbReference>
<dbReference type="GO" id="GO:0000162">
    <property type="term" value="P:L-tryptophan biosynthetic process"/>
    <property type="evidence" value="ECO:0007669"/>
    <property type="project" value="UniProtKB-UniRule"/>
</dbReference>
<dbReference type="FunFam" id="1.20.970.10:FF:000006">
    <property type="entry name" value="Anthranilate phosphoribosyltransferase"/>
    <property type="match status" value="1"/>
</dbReference>
<dbReference type="FunFam" id="3.40.1030.10:FF:000002">
    <property type="entry name" value="Anthranilate phosphoribosyltransferase"/>
    <property type="match status" value="1"/>
</dbReference>
<dbReference type="Gene3D" id="3.40.1030.10">
    <property type="entry name" value="Nucleoside phosphorylase/phosphoribosyltransferase catalytic domain"/>
    <property type="match status" value="1"/>
</dbReference>
<dbReference type="Gene3D" id="1.20.970.10">
    <property type="entry name" value="Transferase, Pyrimidine Nucleoside Phosphorylase, Chain C"/>
    <property type="match status" value="1"/>
</dbReference>
<dbReference type="HAMAP" id="MF_00211">
    <property type="entry name" value="TrpD"/>
    <property type="match status" value="1"/>
</dbReference>
<dbReference type="InterPro" id="IPR005940">
    <property type="entry name" value="Anthranilate_Pribosyl_Tfrase"/>
</dbReference>
<dbReference type="InterPro" id="IPR000312">
    <property type="entry name" value="Glycosyl_Trfase_fam3"/>
</dbReference>
<dbReference type="InterPro" id="IPR017459">
    <property type="entry name" value="Glycosyl_Trfase_fam3_N_dom"/>
</dbReference>
<dbReference type="InterPro" id="IPR036320">
    <property type="entry name" value="Glycosyl_Trfase_fam3_N_dom_sf"/>
</dbReference>
<dbReference type="InterPro" id="IPR035902">
    <property type="entry name" value="Nuc_phospho_transferase"/>
</dbReference>
<dbReference type="NCBIfam" id="TIGR01245">
    <property type="entry name" value="trpD"/>
    <property type="match status" value="1"/>
</dbReference>
<dbReference type="PANTHER" id="PTHR43285">
    <property type="entry name" value="ANTHRANILATE PHOSPHORIBOSYLTRANSFERASE"/>
    <property type="match status" value="1"/>
</dbReference>
<dbReference type="PANTHER" id="PTHR43285:SF2">
    <property type="entry name" value="ANTHRANILATE PHOSPHORIBOSYLTRANSFERASE"/>
    <property type="match status" value="1"/>
</dbReference>
<dbReference type="Pfam" id="PF02885">
    <property type="entry name" value="Glycos_trans_3N"/>
    <property type="match status" value="1"/>
</dbReference>
<dbReference type="Pfam" id="PF00591">
    <property type="entry name" value="Glycos_transf_3"/>
    <property type="match status" value="1"/>
</dbReference>
<dbReference type="SUPFAM" id="SSF52418">
    <property type="entry name" value="Nucleoside phosphorylase/phosphoribosyltransferase catalytic domain"/>
    <property type="match status" value="1"/>
</dbReference>
<dbReference type="SUPFAM" id="SSF47648">
    <property type="entry name" value="Nucleoside phosphorylase/phosphoribosyltransferase N-terminal domain"/>
    <property type="match status" value="1"/>
</dbReference>
<proteinExistence type="inferred from homology"/>
<accession>A9M4G6</accession>
<name>TRPD_NEIM0</name>